<proteinExistence type="inferred from homology"/>
<name>CPSD_STRPN</name>
<accession>Q9AHD2</accession>
<feature type="chain" id="PRO_0000217239" description="Tyrosine-protein kinase CpsD">
    <location>
        <begin position="1"/>
        <end position="227"/>
    </location>
</feature>
<reference key="1">
    <citation type="journal article" date="2001" name="Infect. Immun.">
        <title>Molecular characterization of Streptococcus pneumoniae type 4, 6B, 8, and 18C capsular polysaccharide gene clusters.</title>
        <authorList>
            <person name="Jiang S.-M."/>
            <person name="Wang L."/>
            <person name="Reeves P.R."/>
        </authorList>
    </citation>
    <scope>NUCLEOTIDE SEQUENCE [GENOMIC DNA]</scope>
    <source>
        <strain>WCH35 / Serotype 4</strain>
    </source>
</reference>
<reference key="2">
    <citation type="journal article" date="2001" name="Science">
        <title>Complete genome sequence of a virulent isolate of Streptococcus pneumoniae.</title>
        <authorList>
            <person name="Tettelin H."/>
            <person name="Nelson K.E."/>
            <person name="Paulsen I.T."/>
            <person name="Eisen J.A."/>
            <person name="Read T.D."/>
            <person name="Peterson S.N."/>
            <person name="Heidelberg J.F."/>
            <person name="DeBoy R.T."/>
            <person name="Haft D.H."/>
            <person name="Dodson R.J."/>
            <person name="Durkin A.S."/>
            <person name="Gwinn M.L."/>
            <person name="Kolonay J.F."/>
            <person name="Nelson W.C."/>
            <person name="Peterson J.D."/>
            <person name="Umayam L.A."/>
            <person name="White O."/>
            <person name="Salzberg S.L."/>
            <person name="Lewis M.R."/>
            <person name="Radune D."/>
            <person name="Holtzapple E.K."/>
            <person name="Khouri H.M."/>
            <person name="Wolf A.M."/>
            <person name="Utterback T.R."/>
            <person name="Hansen C.L."/>
            <person name="McDonald L.A."/>
            <person name="Feldblyum T.V."/>
            <person name="Angiuoli S.V."/>
            <person name="Dickinson T."/>
            <person name="Hickey E.K."/>
            <person name="Holt I.E."/>
            <person name="Loftus B.J."/>
            <person name="Yang F."/>
            <person name="Smith H.O."/>
            <person name="Venter J.C."/>
            <person name="Dougherty B.A."/>
            <person name="Morrison D.A."/>
            <person name="Hollingshead S.K."/>
            <person name="Fraser C.M."/>
        </authorList>
    </citation>
    <scope>NUCLEOTIDE SEQUENCE [LARGE SCALE GENOMIC DNA]</scope>
    <source>
        <strain>ATCC BAA-334 / TIGR4</strain>
    </source>
</reference>
<dbReference type="EC" id="2.7.10.2"/>
<dbReference type="EMBL" id="AF316639">
    <property type="protein sequence ID" value="AAK20669.1"/>
    <property type="molecule type" value="Genomic_DNA"/>
</dbReference>
<dbReference type="EMBL" id="AE005672">
    <property type="protein sequence ID" value="AAK74522.1"/>
    <property type="molecule type" value="Genomic_DNA"/>
</dbReference>
<dbReference type="PIR" id="A95041">
    <property type="entry name" value="A95041"/>
</dbReference>
<dbReference type="SMR" id="Q9AHD2"/>
<dbReference type="PaxDb" id="170187-SP_0349"/>
<dbReference type="EnsemblBacteria" id="AAK74522">
    <property type="protein sequence ID" value="AAK74522"/>
    <property type="gene ID" value="SP_0349"/>
</dbReference>
<dbReference type="KEGG" id="spn:SP_0349"/>
<dbReference type="eggNOG" id="COG0489">
    <property type="taxonomic scope" value="Bacteria"/>
</dbReference>
<dbReference type="PhylomeDB" id="Q9AHD2"/>
<dbReference type="BioCyc" id="SPNE170187:G1FZB-359-MONOMER"/>
<dbReference type="UniPathway" id="UPA00934"/>
<dbReference type="Proteomes" id="UP000000585">
    <property type="component" value="Chromosome"/>
</dbReference>
<dbReference type="GO" id="GO:0005886">
    <property type="term" value="C:plasma membrane"/>
    <property type="evidence" value="ECO:0007669"/>
    <property type="project" value="TreeGrafter"/>
</dbReference>
<dbReference type="GO" id="GO:0005524">
    <property type="term" value="F:ATP binding"/>
    <property type="evidence" value="ECO:0007669"/>
    <property type="project" value="UniProtKB-KW"/>
</dbReference>
<dbReference type="GO" id="GO:0004715">
    <property type="term" value="F:non-membrane spanning protein tyrosine kinase activity"/>
    <property type="evidence" value="ECO:0007669"/>
    <property type="project" value="UniProtKB-EC"/>
</dbReference>
<dbReference type="GO" id="GO:0045227">
    <property type="term" value="P:capsule polysaccharide biosynthetic process"/>
    <property type="evidence" value="ECO:0007669"/>
    <property type="project" value="UniProtKB-UniPathway"/>
</dbReference>
<dbReference type="CDD" id="cd05387">
    <property type="entry name" value="BY-kinase"/>
    <property type="match status" value="1"/>
</dbReference>
<dbReference type="Gene3D" id="3.40.50.300">
    <property type="entry name" value="P-loop containing nucleotide triphosphate hydrolases"/>
    <property type="match status" value="1"/>
</dbReference>
<dbReference type="InterPro" id="IPR025669">
    <property type="entry name" value="AAA_dom"/>
</dbReference>
<dbReference type="InterPro" id="IPR050445">
    <property type="entry name" value="Bact_polysacc_biosynth/exp"/>
</dbReference>
<dbReference type="InterPro" id="IPR027417">
    <property type="entry name" value="P-loop_NTPase"/>
</dbReference>
<dbReference type="InterPro" id="IPR005702">
    <property type="entry name" value="Wzc-like_C"/>
</dbReference>
<dbReference type="NCBIfam" id="TIGR01007">
    <property type="entry name" value="eps_fam"/>
    <property type="match status" value="1"/>
</dbReference>
<dbReference type="PANTHER" id="PTHR32309:SF13">
    <property type="entry name" value="FERRIC ENTEROBACTIN TRANSPORT PROTEIN FEPE"/>
    <property type="match status" value="1"/>
</dbReference>
<dbReference type="PANTHER" id="PTHR32309">
    <property type="entry name" value="TYROSINE-PROTEIN KINASE"/>
    <property type="match status" value="1"/>
</dbReference>
<dbReference type="Pfam" id="PF13614">
    <property type="entry name" value="AAA_31"/>
    <property type="match status" value="1"/>
</dbReference>
<dbReference type="SUPFAM" id="SSF52540">
    <property type="entry name" value="P-loop containing nucleoside triphosphate hydrolases"/>
    <property type="match status" value="1"/>
</dbReference>
<sequence>MPTLEIAQKKLEFIKKAEEYYNALCTNIQLSGDKLKVISVTSVNPGEGKTTTSINIAWSFARAGYKTLLIDGDTRNSVMLGVFKSREKITGLTEFLSGTADLSHGLCDTNIENLFVVQSGSVSPNPTALLQSKNFNDMIETLRKYFDYIIIDTPPIGIVIDAAIITQKCDASILVTATGEANKRDIQKAKQQLKQTGKLFLGVVLNKLDISVNKYGVYGSYGNYGKK</sequence>
<evidence type="ECO:0000250" key="1"/>
<evidence type="ECO:0000305" key="2"/>
<keyword id="KW-0067">ATP-binding</keyword>
<keyword id="KW-0972">Capsule biogenesis/degradation</keyword>
<keyword id="KW-0270">Exopolysaccharide synthesis</keyword>
<keyword id="KW-0418">Kinase</keyword>
<keyword id="KW-0547">Nucleotide-binding</keyword>
<keyword id="KW-0597">Phosphoprotein</keyword>
<keyword id="KW-1185">Reference proteome</keyword>
<keyword id="KW-0808">Transferase</keyword>
<keyword id="KW-0829">Tyrosine-protein kinase</keyword>
<organism>
    <name type="scientific">Streptococcus pneumoniae serotype 4 (strain ATCC BAA-334 / TIGR4)</name>
    <dbReference type="NCBI Taxonomy" id="170187"/>
    <lineage>
        <taxon>Bacteria</taxon>
        <taxon>Bacillati</taxon>
        <taxon>Bacillota</taxon>
        <taxon>Bacilli</taxon>
        <taxon>Lactobacillales</taxon>
        <taxon>Streptococcaceae</taxon>
        <taxon>Streptococcus</taxon>
    </lineage>
</organism>
<protein>
    <recommendedName>
        <fullName>Tyrosine-protein kinase CpsD</fullName>
        <ecNumber>2.7.10.2</ecNumber>
    </recommendedName>
</protein>
<comment type="function">
    <text evidence="1">Involved in the regulation of capsular polysaccharide biosynthesis. Autophosphorylation of CpsD attenuates its activity and reduces the level of encapsulation. May be part of a complex that directs the coordinated polymerization and export to the cell surface of the capsular polysaccharide (By similarity).</text>
</comment>
<comment type="catalytic activity">
    <reaction>
        <text>L-tyrosyl-[protein] + ATP = O-phospho-L-tyrosyl-[protein] + ADP + H(+)</text>
        <dbReference type="Rhea" id="RHEA:10596"/>
        <dbReference type="Rhea" id="RHEA-COMP:10136"/>
        <dbReference type="Rhea" id="RHEA-COMP:20101"/>
        <dbReference type="ChEBI" id="CHEBI:15378"/>
        <dbReference type="ChEBI" id="CHEBI:30616"/>
        <dbReference type="ChEBI" id="CHEBI:46858"/>
        <dbReference type="ChEBI" id="CHEBI:61978"/>
        <dbReference type="ChEBI" id="CHEBI:456216"/>
        <dbReference type="EC" id="2.7.10.2"/>
    </reaction>
</comment>
<comment type="activity regulation">
    <text evidence="1">Dephosphorylated and activated by CpsB.</text>
</comment>
<comment type="pathway">
    <text>Capsule biogenesis; capsule polysaccharide biosynthesis.</text>
</comment>
<comment type="PTM">
    <text evidence="1">Autophosphorylated.</text>
</comment>
<comment type="similarity">
    <text evidence="2">Belongs to the CpsD/CapB family.</text>
</comment>
<gene>
    <name type="primary">cpsD</name>
    <name type="synonym">wze</name>
    <name type="ordered locus">SP_0349</name>
</gene>